<keyword id="KW-0963">Cytoplasm</keyword>
<keyword id="KW-0378">Hydrolase</keyword>
<keyword id="KW-0540">Nuclease</keyword>
<keyword id="KW-1185">Reference proteome</keyword>
<keyword id="KW-0690">Ribosome biogenesis</keyword>
<reference key="1">
    <citation type="journal article" date="2009" name="Proc. Natl. Acad. Sci. U.S.A.">
        <title>The genomic basis of trophic strategy in marine bacteria.</title>
        <authorList>
            <person name="Lauro F.M."/>
            <person name="McDougald D."/>
            <person name="Thomas T."/>
            <person name="Williams T.J."/>
            <person name="Egan S."/>
            <person name="Rice S."/>
            <person name="DeMaere M.Z."/>
            <person name="Ting L."/>
            <person name="Ertan H."/>
            <person name="Johnson J."/>
            <person name="Ferriera S."/>
            <person name="Lapidus A."/>
            <person name="Anderson I."/>
            <person name="Kyrpides N."/>
            <person name="Munk A.C."/>
            <person name="Detter C."/>
            <person name="Han C.S."/>
            <person name="Brown M.V."/>
            <person name="Robb F.T."/>
            <person name="Kjelleberg S."/>
            <person name="Cavicchioli R."/>
        </authorList>
    </citation>
    <scope>NUCLEOTIDE SEQUENCE [LARGE SCALE GENOMIC DNA]</scope>
    <source>
        <strain>DSM 13593 / LMG 18877 / RB2256</strain>
    </source>
</reference>
<dbReference type="EC" id="3.1.-.-" evidence="1"/>
<dbReference type="EMBL" id="CP000356">
    <property type="protein sequence ID" value="ABF52643.1"/>
    <property type="molecule type" value="Genomic_DNA"/>
</dbReference>
<dbReference type="RefSeq" id="WP_011541231.1">
    <property type="nucleotide sequence ID" value="NC_008048.1"/>
</dbReference>
<dbReference type="SMR" id="Q1GUM9"/>
<dbReference type="STRING" id="317655.Sala_0925"/>
<dbReference type="KEGG" id="sal:Sala_0925"/>
<dbReference type="eggNOG" id="COG0816">
    <property type="taxonomic scope" value="Bacteria"/>
</dbReference>
<dbReference type="HOGENOM" id="CLU_098240_1_1_5"/>
<dbReference type="OrthoDB" id="9796140at2"/>
<dbReference type="Proteomes" id="UP000006578">
    <property type="component" value="Chromosome"/>
</dbReference>
<dbReference type="GO" id="GO:0005829">
    <property type="term" value="C:cytosol"/>
    <property type="evidence" value="ECO:0007669"/>
    <property type="project" value="TreeGrafter"/>
</dbReference>
<dbReference type="GO" id="GO:0004518">
    <property type="term" value="F:nuclease activity"/>
    <property type="evidence" value="ECO:0007669"/>
    <property type="project" value="UniProtKB-KW"/>
</dbReference>
<dbReference type="GO" id="GO:0000967">
    <property type="term" value="P:rRNA 5'-end processing"/>
    <property type="evidence" value="ECO:0007669"/>
    <property type="project" value="UniProtKB-UniRule"/>
</dbReference>
<dbReference type="CDD" id="cd16964">
    <property type="entry name" value="YqgF"/>
    <property type="match status" value="1"/>
</dbReference>
<dbReference type="Gene3D" id="3.30.420.140">
    <property type="entry name" value="YqgF/RNase H-like domain"/>
    <property type="match status" value="1"/>
</dbReference>
<dbReference type="HAMAP" id="MF_00651">
    <property type="entry name" value="Nuclease_YqgF"/>
    <property type="match status" value="1"/>
</dbReference>
<dbReference type="InterPro" id="IPR012337">
    <property type="entry name" value="RNaseH-like_sf"/>
</dbReference>
<dbReference type="InterPro" id="IPR005227">
    <property type="entry name" value="YqgF"/>
</dbReference>
<dbReference type="InterPro" id="IPR006641">
    <property type="entry name" value="YqgF/RNaseH-like_dom"/>
</dbReference>
<dbReference type="InterPro" id="IPR037027">
    <property type="entry name" value="YqgF/RNaseH-like_dom_sf"/>
</dbReference>
<dbReference type="NCBIfam" id="TIGR00250">
    <property type="entry name" value="RNAse_H_YqgF"/>
    <property type="match status" value="1"/>
</dbReference>
<dbReference type="PANTHER" id="PTHR33317">
    <property type="entry name" value="POLYNUCLEOTIDYL TRANSFERASE, RIBONUCLEASE H-LIKE SUPERFAMILY PROTEIN"/>
    <property type="match status" value="1"/>
</dbReference>
<dbReference type="PANTHER" id="PTHR33317:SF4">
    <property type="entry name" value="POLYNUCLEOTIDYL TRANSFERASE, RIBONUCLEASE H-LIKE SUPERFAMILY PROTEIN"/>
    <property type="match status" value="1"/>
</dbReference>
<dbReference type="Pfam" id="PF03652">
    <property type="entry name" value="RuvX"/>
    <property type="match status" value="1"/>
</dbReference>
<dbReference type="SMART" id="SM00732">
    <property type="entry name" value="YqgFc"/>
    <property type="match status" value="1"/>
</dbReference>
<dbReference type="SUPFAM" id="SSF53098">
    <property type="entry name" value="Ribonuclease H-like"/>
    <property type="match status" value="1"/>
</dbReference>
<protein>
    <recommendedName>
        <fullName evidence="1">Putative pre-16S rRNA nuclease</fullName>
        <ecNumber evidence="1">3.1.-.-</ecNumber>
    </recommendedName>
</protein>
<sequence length="152" mass="15834">MITTAAPDFAAALPNGGRLAGLDVGTKTIGVALCDAGWSFASPDKTIVRKRFSADLDALKALVAGQAVVGLVVGLPLNMDGSDSPRTQSTRAFARNLAPLGLPVLLWDERWSTAAVERAMIAADVSRAKRAERIDSAAAAFILQGAIDAMTR</sequence>
<feature type="chain" id="PRO_0000257593" description="Putative pre-16S rRNA nuclease">
    <location>
        <begin position="1"/>
        <end position="152"/>
    </location>
</feature>
<name>YQGF_SPHAL</name>
<organism>
    <name type="scientific">Sphingopyxis alaskensis (strain DSM 13593 / LMG 18877 / RB2256)</name>
    <name type="common">Sphingomonas alaskensis</name>
    <dbReference type="NCBI Taxonomy" id="317655"/>
    <lineage>
        <taxon>Bacteria</taxon>
        <taxon>Pseudomonadati</taxon>
        <taxon>Pseudomonadota</taxon>
        <taxon>Alphaproteobacteria</taxon>
        <taxon>Sphingomonadales</taxon>
        <taxon>Sphingomonadaceae</taxon>
        <taxon>Sphingopyxis</taxon>
    </lineage>
</organism>
<proteinExistence type="inferred from homology"/>
<accession>Q1GUM9</accession>
<evidence type="ECO:0000255" key="1">
    <source>
        <dbReference type="HAMAP-Rule" id="MF_00651"/>
    </source>
</evidence>
<comment type="function">
    <text evidence="1">Could be a nuclease involved in processing of the 5'-end of pre-16S rRNA.</text>
</comment>
<comment type="subcellular location">
    <subcellularLocation>
        <location evidence="1">Cytoplasm</location>
    </subcellularLocation>
</comment>
<comment type="similarity">
    <text evidence="1">Belongs to the YqgF nuclease family.</text>
</comment>
<gene>
    <name type="ordered locus">Sala_0925</name>
</gene>